<protein>
    <recommendedName>
        <fullName evidence="1">Dol-P-Glc:Glc(2)Man(9)GlcNAc(2)-PP-Dol alpha-1,2-glucosyltransferase</fullName>
        <ecNumber evidence="1">2.4.1.256</ecNumber>
    </recommendedName>
    <alternativeName>
        <fullName evidence="3">Alpha-2-glucosyltransferase ALG10</fullName>
    </alternativeName>
</protein>
<reference evidence="7" key="1">
    <citation type="journal article" date="2002" name="Mol. Biol. Evol.">
        <title>Common origin and evolution of glycosyltransferases using Dol-P-monosaccharides as donor substrate.</title>
        <authorList>
            <person name="Oriol R."/>
            <person name="Martinez-Duncker I."/>
            <person name="Chantret I."/>
            <person name="Mollicone R."/>
            <person name="Codogno P."/>
        </authorList>
    </citation>
    <scope>NUCLEOTIDE SEQUENCE [MRNA]</scope>
</reference>
<reference evidence="5" key="2">
    <citation type="journal article" date="2000" name="Science">
        <title>The genome sequence of Drosophila melanogaster.</title>
        <authorList>
            <person name="Adams M.D."/>
            <person name="Celniker S.E."/>
            <person name="Holt R.A."/>
            <person name="Evans C.A."/>
            <person name="Gocayne J.D."/>
            <person name="Amanatides P.G."/>
            <person name="Scherer S.E."/>
            <person name="Li P.W."/>
            <person name="Hoskins R.A."/>
            <person name="Galle R.F."/>
            <person name="George R.A."/>
            <person name="Lewis S.E."/>
            <person name="Richards S."/>
            <person name="Ashburner M."/>
            <person name="Henderson S.N."/>
            <person name="Sutton G.G."/>
            <person name="Wortman J.R."/>
            <person name="Yandell M.D."/>
            <person name="Zhang Q."/>
            <person name="Chen L.X."/>
            <person name="Brandon R.C."/>
            <person name="Rogers Y.-H.C."/>
            <person name="Blazej R.G."/>
            <person name="Champe M."/>
            <person name="Pfeiffer B.D."/>
            <person name="Wan K.H."/>
            <person name="Doyle C."/>
            <person name="Baxter E.G."/>
            <person name="Helt G."/>
            <person name="Nelson C.R."/>
            <person name="Miklos G.L.G."/>
            <person name="Abril J.F."/>
            <person name="Agbayani A."/>
            <person name="An H.-J."/>
            <person name="Andrews-Pfannkoch C."/>
            <person name="Baldwin D."/>
            <person name="Ballew R.M."/>
            <person name="Basu A."/>
            <person name="Baxendale J."/>
            <person name="Bayraktaroglu L."/>
            <person name="Beasley E.M."/>
            <person name="Beeson K.Y."/>
            <person name="Benos P.V."/>
            <person name="Berman B.P."/>
            <person name="Bhandari D."/>
            <person name="Bolshakov S."/>
            <person name="Borkova D."/>
            <person name="Botchan M.R."/>
            <person name="Bouck J."/>
            <person name="Brokstein P."/>
            <person name="Brottier P."/>
            <person name="Burtis K.C."/>
            <person name="Busam D.A."/>
            <person name="Butler H."/>
            <person name="Cadieu E."/>
            <person name="Center A."/>
            <person name="Chandra I."/>
            <person name="Cherry J.M."/>
            <person name="Cawley S."/>
            <person name="Dahlke C."/>
            <person name="Davenport L.B."/>
            <person name="Davies P."/>
            <person name="de Pablos B."/>
            <person name="Delcher A."/>
            <person name="Deng Z."/>
            <person name="Mays A.D."/>
            <person name="Dew I."/>
            <person name="Dietz S.M."/>
            <person name="Dodson K."/>
            <person name="Doup L.E."/>
            <person name="Downes M."/>
            <person name="Dugan-Rocha S."/>
            <person name="Dunkov B.C."/>
            <person name="Dunn P."/>
            <person name="Durbin K.J."/>
            <person name="Evangelista C.C."/>
            <person name="Ferraz C."/>
            <person name="Ferriera S."/>
            <person name="Fleischmann W."/>
            <person name="Fosler C."/>
            <person name="Gabrielian A.E."/>
            <person name="Garg N.S."/>
            <person name="Gelbart W.M."/>
            <person name="Glasser K."/>
            <person name="Glodek A."/>
            <person name="Gong F."/>
            <person name="Gorrell J.H."/>
            <person name="Gu Z."/>
            <person name="Guan P."/>
            <person name="Harris M."/>
            <person name="Harris N.L."/>
            <person name="Harvey D.A."/>
            <person name="Heiman T.J."/>
            <person name="Hernandez J.R."/>
            <person name="Houck J."/>
            <person name="Hostin D."/>
            <person name="Houston K.A."/>
            <person name="Howland T.J."/>
            <person name="Wei M.-H."/>
            <person name="Ibegwam C."/>
            <person name="Jalali M."/>
            <person name="Kalush F."/>
            <person name="Karpen G.H."/>
            <person name="Ke Z."/>
            <person name="Kennison J.A."/>
            <person name="Ketchum K.A."/>
            <person name="Kimmel B.E."/>
            <person name="Kodira C.D."/>
            <person name="Kraft C.L."/>
            <person name="Kravitz S."/>
            <person name="Kulp D."/>
            <person name="Lai Z."/>
            <person name="Lasko P."/>
            <person name="Lei Y."/>
            <person name="Levitsky A.A."/>
            <person name="Li J.H."/>
            <person name="Li Z."/>
            <person name="Liang Y."/>
            <person name="Lin X."/>
            <person name="Liu X."/>
            <person name="Mattei B."/>
            <person name="McIntosh T.C."/>
            <person name="McLeod M.P."/>
            <person name="McPherson D."/>
            <person name="Merkulov G."/>
            <person name="Milshina N.V."/>
            <person name="Mobarry C."/>
            <person name="Morris J."/>
            <person name="Moshrefi A."/>
            <person name="Mount S.M."/>
            <person name="Moy M."/>
            <person name="Murphy B."/>
            <person name="Murphy L."/>
            <person name="Muzny D.M."/>
            <person name="Nelson D.L."/>
            <person name="Nelson D.R."/>
            <person name="Nelson K.A."/>
            <person name="Nixon K."/>
            <person name="Nusskern D.R."/>
            <person name="Pacleb J.M."/>
            <person name="Palazzolo M."/>
            <person name="Pittman G.S."/>
            <person name="Pan S."/>
            <person name="Pollard J."/>
            <person name="Puri V."/>
            <person name="Reese M.G."/>
            <person name="Reinert K."/>
            <person name="Remington K."/>
            <person name="Saunders R.D.C."/>
            <person name="Scheeler F."/>
            <person name="Shen H."/>
            <person name="Shue B.C."/>
            <person name="Siden-Kiamos I."/>
            <person name="Simpson M."/>
            <person name="Skupski M.P."/>
            <person name="Smith T.J."/>
            <person name="Spier E."/>
            <person name="Spradling A.C."/>
            <person name="Stapleton M."/>
            <person name="Strong R."/>
            <person name="Sun E."/>
            <person name="Svirskas R."/>
            <person name="Tector C."/>
            <person name="Turner R."/>
            <person name="Venter E."/>
            <person name="Wang A.H."/>
            <person name="Wang X."/>
            <person name="Wang Z.-Y."/>
            <person name="Wassarman D.A."/>
            <person name="Weinstock G.M."/>
            <person name="Weissenbach J."/>
            <person name="Williams S.M."/>
            <person name="Woodage T."/>
            <person name="Worley K.C."/>
            <person name="Wu D."/>
            <person name="Yang S."/>
            <person name="Yao Q.A."/>
            <person name="Ye J."/>
            <person name="Yeh R.-F."/>
            <person name="Zaveri J.S."/>
            <person name="Zhan M."/>
            <person name="Zhang G."/>
            <person name="Zhao Q."/>
            <person name="Zheng L."/>
            <person name="Zheng X.H."/>
            <person name="Zhong F.N."/>
            <person name="Zhong W."/>
            <person name="Zhou X."/>
            <person name="Zhu S.C."/>
            <person name="Zhu X."/>
            <person name="Smith H.O."/>
            <person name="Gibbs R.A."/>
            <person name="Myers E.W."/>
            <person name="Rubin G.M."/>
            <person name="Venter J.C."/>
        </authorList>
    </citation>
    <scope>NUCLEOTIDE SEQUENCE [LARGE SCALE GENOMIC DNA]</scope>
    <source>
        <strain>Berkeley</strain>
    </source>
</reference>
<reference evidence="5" key="3">
    <citation type="journal article" date="2002" name="Genome Biol.">
        <title>Annotation of the Drosophila melanogaster euchromatic genome: a systematic review.</title>
        <authorList>
            <person name="Misra S."/>
            <person name="Crosby M.A."/>
            <person name="Mungall C.J."/>
            <person name="Matthews B.B."/>
            <person name="Campbell K.S."/>
            <person name="Hradecky P."/>
            <person name="Huang Y."/>
            <person name="Kaminker J.S."/>
            <person name="Millburn G.H."/>
            <person name="Prochnik S.E."/>
            <person name="Smith C.D."/>
            <person name="Tupy J.L."/>
            <person name="Whitfield E.J."/>
            <person name="Bayraktaroglu L."/>
            <person name="Berman B.P."/>
            <person name="Bettencourt B.R."/>
            <person name="Celniker S.E."/>
            <person name="de Grey A.D.N.J."/>
            <person name="Drysdale R.A."/>
            <person name="Harris N.L."/>
            <person name="Richter J."/>
            <person name="Russo S."/>
            <person name="Schroeder A.J."/>
            <person name="Shu S.Q."/>
            <person name="Stapleton M."/>
            <person name="Yamada C."/>
            <person name="Ashburner M."/>
            <person name="Gelbart W.M."/>
            <person name="Rubin G.M."/>
            <person name="Lewis S.E."/>
        </authorList>
    </citation>
    <scope>GENOME REANNOTATION</scope>
    <source>
        <strain>Berkeley</strain>
    </source>
</reference>
<reference evidence="6" key="4">
    <citation type="journal article" date="2002" name="Genome Biol.">
        <title>A Drosophila full-length cDNA resource.</title>
        <authorList>
            <person name="Stapleton M."/>
            <person name="Carlson J.W."/>
            <person name="Brokstein P."/>
            <person name="Yu C."/>
            <person name="Champe M."/>
            <person name="George R.A."/>
            <person name="Guarin H."/>
            <person name="Kronmiller B."/>
            <person name="Pacleb J.M."/>
            <person name="Park S."/>
            <person name="Wan K.H."/>
            <person name="Rubin G.M."/>
            <person name="Celniker S.E."/>
        </authorList>
    </citation>
    <scope>NUCLEOTIDE SEQUENCE [LARGE SCALE MRNA]</scope>
    <source>
        <strain evidence="6">Berkeley</strain>
        <tissue evidence="6">Head</tissue>
    </source>
</reference>
<sequence>MNGSWKLILPVGFVLYSLPLFLRVNGTSDYVIDEEFHIPQGLAFCRKEFDVWDPKITTFPGLYLIALLLNPLSLCTVTGLRMLSLAGAGINILLLYKIRRRILAGSGGNSYAAHEAITMSVLPPLYFFSHLYYTDTLSLTMVLLFYNYWQQEAHLPAAVFGAASVLMRQTNIVWVCMATGMTVLDTLVNQCARTGRVPKENVRLMGKELWLQLVSSPQLLCNCILSILAKCCFYASIILPFVGFLFINGSIVVGDKSAHEASLHVPQLFYFAIFAAGFGISNTIRQFRPAAELIRRNRVLSLLALLLILVVVHLNTEVHPYLLADNRHYTFYIWSRLYGRFWWFRYAMAPAYLLSICVLFCGLRHMPESFKLMFPLSLFLVLCFQRLLELRYFLVPYILFRLNTRHTRKGYAEWLELGAHLLLNVATFYVYFTKEFYWKNYRTPQRIIW</sequence>
<organism>
    <name type="scientific">Drosophila melanogaster</name>
    <name type="common">Fruit fly</name>
    <dbReference type="NCBI Taxonomy" id="7227"/>
    <lineage>
        <taxon>Eukaryota</taxon>
        <taxon>Metazoa</taxon>
        <taxon>Ecdysozoa</taxon>
        <taxon>Arthropoda</taxon>
        <taxon>Hexapoda</taxon>
        <taxon>Insecta</taxon>
        <taxon>Pterygota</taxon>
        <taxon>Neoptera</taxon>
        <taxon>Endopterygota</taxon>
        <taxon>Diptera</taxon>
        <taxon>Brachycera</taxon>
        <taxon>Muscomorpha</taxon>
        <taxon>Ephydroidea</taxon>
        <taxon>Drosophilidae</taxon>
        <taxon>Drosophila</taxon>
        <taxon>Sophophora</taxon>
    </lineage>
</organism>
<comment type="function">
    <text evidence="1">Dol-P-Glc:Glc(2)Man(9)GlcNAc(2)-PP-Dol alpha-1,2-glucosyltransferase that operates in the biosynthetic pathway of dolichol-linked oligosaccharides, the glycan precursors employed in protein asparagine (N)-glycosylation. The assembly of dolichol-linked oligosaccharides begins on the cytosolic side of the endoplasmic reticulum membrane and finishes in its lumen. The sequential addition of sugars to dolichol pyrophosphate produces dolichol-linked oligosaccharides containing fourteen sugars, including two GlcNAcs, nine mannoses and three glucoses. Once assembled, the oligosaccharide is transferred from the lipid to nascent proteins by oligosaccharyltransferases. In the lumen of the endoplasmic reticulum, adds the third and last glucose residue from dolichyl phosphate glucose (Dol-P-Glc) onto the lipid-linked oligosaccharide intermediate Glc(2)Man(9)GlcNAc(2)-PP-Dol to produce Glc(3)Man(9)GlcNAc(2)-PP-Dol.</text>
</comment>
<comment type="catalytic activity">
    <reaction evidence="1">
        <text>an alpha-D-Glc-(1-&gt;3)-alpha-D-Glc-(1-&gt;3)-alpha-D-Man-(1-&gt;2)-alpha-D-Man-(1-&gt;2)-alpha-D-Man-(1-&gt;3)-[alpha-D-Man-(1-&gt;2)-alpha-D-Man-(1-&gt;3)-[alpha-D-Man-(1-&gt;2)-alpha-D-Man-(1-&gt;6)]-alpha-D-Man-(1-&gt;6)]-beta-D-Man-(1-&gt;4)-beta-D-GlcNAc-(1-&gt;4)-alpha-D-GlcNAc-diphospho-di-trans,poly-cis-dolichol + a di-trans,poly-cis-dolichyl beta-D-glucosyl phosphate = a alpha-D-Glc-(1-&gt;2)-alpha-D-Glc-(1-&gt;3)-alpha-D-Glc-(1-&gt;3)-alpha-D-Man-(1-&gt;2)-alpha-D-Man-(1-&gt;2)-alpha-D-Man-(1-&gt;3)-[alpha-D-Man-(1-&gt;2)-alpha-D-Man-(1-&gt;3)-[alpha-D-Man-(1-&gt;2)-alpha-D-Man-(1-&gt;6)]-alpha-D-Man-(1-&gt;6)]-beta-D-Man-(1-&gt;4)-beta-D-GlcNAc-(1-&gt;4)-alpha-D-GlcNAc-diphospho-di-trans,poly-cis-dolichol + a di-trans,poly-cis-dolichyl phosphate + H(+)</text>
        <dbReference type="Rhea" id="RHEA:29543"/>
        <dbReference type="Rhea" id="RHEA-COMP:19498"/>
        <dbReference type="Rhea" id="RHEA-COMP:19502"/>
        <dbReference type="Rhea" id="RHEA-COMP:19512"/>
        <dbReference type="Rhea" id="RHEA-COMP:19522"/>
        <dbReference type="ChEBI" id="CHEBI:15378"/>
        <dbReference type="ChEBI" id="CHEBI:57525"/>
        <dbReference type="ChEBI" id="CHEBI:57683"/>
        <dbReference type="ChEBI" id="CHEBI:132522"/>
        <dbReference type="ChEBI" id="CHEBI:132523"/>
        <dbReference type="EC" id="2.4.1.256"/>
    </reaction>
    <physiologicalReaction direction="left-to-right" evidence="1">
        <dbReference type="Rhea" id="RHEA:29544"/>
    </physiologicalReaction>
</comment>
<comment type="pathway">
    <text evidence="1">Protein modification; protein glycosylation.</text>
</comment>
<comment type="subcellular location">
    <subcellularLocation>
        <location evidence="1">Endoplasmic reticulum membrane</location>
        <topology evidence="2">Multi-pass membrane protein</topology>
    </subcellularLocation>
</comment>
<comment type="similarity">
    <text evidence="2">Belongs to the ALG10 glucosyltransferase family.</text>
</comment>
<comment type="sequence caution" evidence="4">
    <conflict type="erroneous initiation">
        <sequence resource="EMBL-CDS" id="AAM75090"/>
    </conflict>
    <text>Extended N-terminus.</text>
</comment>
<proteinExistence type="evidence at transcript level"/>
<gene>
    <name type="primary">Alg10</name>
    <name type="ORF">CG32076</name>
</gene>
<evidence type="ECO:0000250" key="1">
    <source>
        <dbReference type="UniProtKB" id="P50076"/>
    </source>
</evidence>
<evidence type="ECO:0000255" key="2"/>
<evidence type="ECO:0000303" key="3">
    <source>
    </source>
</evidence>
<evidence type="ECO:0000305" key="4"/>
<evidence type="ECO:0000312" key="5">
    <source>
        <dbReference type="EMBL" id="AAF50086.2"/>
    </source>
</evidence>
<evidence type="ECO:0000312" key="6">
    <source>
        <dbReference type="EMBL" id="AAM75090.1"/>
    </source>
</evidence>
<evidence type="ECO:0000312" key="7">
    <source>
        <dbReference type="EMBL" id="CAD24126.1"/>
    </source>
</evidence>
<feature type="chain" id="PRO_0000413533" description="Dol-P-Glc:Glc(2)Man(9)GlcNAc(2)-PP-Dol alpha-1,2-glucosyltransferase">
    <location>
        <begin position="1"/>
        <end position="449"/>
    </location>
</feature>
<feature type="transmembrane region" description="Helical" evidence="2">
    <location>
        <begin position="2"/>
        <end position="22"/>
    </location>
</feature>
<feature type="transmembrane region" description="Helical" evidence="2">
    <location>
        <begin position="59"/>
        <end position="79"/>
    </location>
</feature>
<feature type="transmembrane region" description="Helical" evidence="2">
    <location>
        <begin position="82"/>
        <end position="98"/>
    </location>
</feature>
<feature type="transmembrane region" description="Helical" evidence="2">
    <location>
        <begin position="233"/>
        <end position="253"/>
    </location>
</feature>
<feature type="transmembrane region" description="Helical" evidence="2">
    <location>
        <begin position="261"/>
        <end position="281"/>
    </location>
</feature>
<feature type="transmembrane region" description="Helical" evidence="2">
    <location>
        <begin position="299"/>
        <end position="319"/>
    </location>
</feature>
<feature type="transmembrane region" description="Helical" evidence="2">
    <location>
        <begin position="341"/>
        <end position="361"/>
    </location>
</feature>
<feature type="transmembrane region" description="Helical" evidence="2">
    <location>
        <begin position="370"/>
        <end position="390"/>
    </location>
</feature>
<feature type="transmembrane region" description="Helical" evidence="2">
    <location>
        <begin position="412"/>
        <end position="432"/>
    </location>
</feature>
<feature type="glycosylation site" description="N-linked (GlcNAc...) asparagine" evidence="2">
    <location>
        <position position="25"/>
    </location>
</feature>
<feature type="sequence conflict" description="In Ref. 4; AAM75090." evidence="4" ref="4">
    <original>Q</original>
    <variation>R</variation>
    <location>
        <position position="190"/>
    </location>
</feature>
<feature type="sequence conflict" description="In Ref. 4; AAM75090." evidence="4" ref="4">
    <original>V</original>
    <variation>I</variation>
    <location>
        <position position="197"/>
    </location>
</feature>
<name>ALG10_DROME</name>
<dbReference type="EC" id="2.4.1.256" evidence="1"/>
<dbReference type="EMBL" id="AJ431376">
    <property type="protein sequence ID" value="CAD24126.1"/>
    <property type="molecule type" value="mRNA"/>
</dbReference>
<dbReference type="EMBL" id="AE014296">
    <property type="protein sequence ID" value="AAF50086.2"/>
    <property type="molecule type" value="Genomic_DNA"/>
</dbReference>
<dbReference type="EMBL" id="AY128497">
    <property type="protein sequence ID" value="AAM75090.1"/>
    <property type="status" value="ALT_INIT"/>
    <property type="molecule type" value="mRNA"/>
</dbReference>
<dbReference type="RefSeq" id="NP_729680.1">
    <property type="nucleotide sequence ID" value="NM_168449.2"/>
</dbReference>
<dbReference type="SMR" id="Q8T8L8"/>
<dbReference type="BioGRID" id="77447">
    <property type="interactions" value="1"/>
</dbReference>
<dbReference type="FunCoup" id="Q8T8L8">
    <property type="interactions" value="1885"/>
</dbReference>
<dbReference type="IntAct" id="Q8T8L8">
    <property type="interactions" value="1"/>
</dbReference>
<dbReference type="STRING" id="7227.FBpp0075946"/>
<dbReference type="CAZy" id="GT59">
    <property type="family name" value="Glycosyltransferase Family 59"/>
</dbReference>
<dbReference type="GlyCosmos" id="Q8T8L8">
    <property type="glycosylation" value="1 site, No reported glycans"/>
</dbReference>
<dbReference type="GlyGen" id="Q8T8L8">
    <property type="glycosylation" value="1 site"/>
</dbReference>
<dbReference type="PaxDb" id="7227-FBpp0075946"/>
<dbReference type="EnsemblMetazoa" id="FBtr0076217">
    <property type="protein sequence ID" value="FBpp0075946"/>
    <property type="gene ID" value="FBgn0052076"/>
</dbReference>
<dbReference type="GeneID" id="326193"/>
<dbReference type="KEGG" id="dme:Dmel_CG32076"/>
<dbReference type="UCSC" id="CG32076-RA">
    <property type="organism name" value="d. melanogaster"/>
</dbReference>
<dbReference type="AGR" id="FB:FBgn0052076"/>
<dbReference type="CTD" id="84920"/>
<dbReference type="FlyBase" id="FBgn0052076">
    <property type="gene designation" value="Alg10"/>
</dbReference>
<dbReference type="VEuPathDB" id="VectorBase:FBgn0052076"/>
<dbReference type="eggNOG" id="KOG2642">
    <property type="taxonomic scope" value="Eukaryota"/>
</dbReference>
<dbReference type="HOGENOM" id="CLU_017053_1_0_1"/>
<dbReference type="InParanoid" id="Q8T8L8"/>
<dbReference type="OMA" id="VWDSKIT"/>
<dbReference type="OrthoDB" id="4769at2759"/>
<dbReference type="PhylomeDB" id="Q8T8L8"/>
<dbReference type="UniPathway" id="UPA00378"/>
<dbReference type="BioGRID-ORCS" id="326193">
    <property type="hits" value="0 hits in 3 CRISPR screens"/>
</dbReference>
<dbReference type="GenomeRNAi" id="326193"/>
<dbReference type="PRO" id="PR:Q8T8L8"/>
<dbReference type="Proteomes" id="UP000000803">
    <property type="component" value="Chromosome 3L"/>
</dbReference>
<dbReference type="Bgee" id="FBgn0052076">
    <property type="expression patterns" value="Expressed in eye disc (Drosophila) and 55 other cell types or tissues"/>
</dbReference>
<dbReference type="ExpressionAtlas" id="Q8T8L8">
    <property type="expression patterns" value="baseline and differential"/>
</dbReference>
<dbReference type="GO" id="GO:0005783">
    <property type="term" value="C:endoplasmic reticulum"/>
    <property type="evidence" value="ECO:0000318"/>
    <property type="project" value="GO_Central"/>
</dbReference>
<dbReference type="GO" id="GO:0005789">
    <property type="term" value="C:endoplasmic reticulum membrane"/>
    <property type="evidence" value="ECO:0000250"/>
    <property type="project" value="FlyBase"/>
</dbReference>
<dbReference type="GO" id="GO:0106073">
    <property type="term" value="F:dolichyl pyrophosphate Glc2Man9GlcNAc2 alpha-1,2-glucosyltransferase activity"/>
    <property type="evidence" value="ECO:0000250"/>
    <property type="project" value="FlyBase"/>
</dbReference>
<dbReference type="GO" id="GO:0006488">
    <property type="term" value="P:dolichol-linked oligosaccharide biosynthetic process"/>
    <property type="evidence" value="ECO:0007669"/>
    <property type="project" value="InterPro"/>
</dbReference>
<dbReference type="GO" id="GO:0006487">
    <property type="term" value="P:protein N-linked glycosylation"/>
    <property type="evidence" value="ECO:0000250"/>
    <property type="project" value="FlyBase"/>
</dbReference>
<dbReference type="InterPro" id="IPR016900">
    <property type="entry name" value="Alg10"/>
</dbReference>
<dbReference type="PANTHER" id="PTHR12989">
    <property type="entry name" value="ALPHA-1,2-GLUCOSYLTRANSFERASE ALG10"/>
    <property type="match status" value="1"/>
</dbReference>
<dbReference type="PANTHER" id="PTHR12989:SF10">
    <property type="entry name" value="DOL-P-GLC:GLC(2)MAN(9)GLCNAC(2)-PP-DOL ALPHA-1,2-GLUCOSYLTRANSFERASE-RELATED"/>
    <property type="match status" value="1"/>
</dbReference>
<dbReference type="Pfam" id="PF04922">
    <property type="entry name" value="DIE2_ALG10"/>
    <property type="match status" value="1"/>
</dbReference>
<dbReference type="PIRSF" id="PIRSF028810">
    <property type="entry name" value="Alpha1_2_glucosyltferase_Alg10"/>
    <property type="match status" value="1"/>
</dbReference>
<keyword id="KW-0256">Endoplasmic reticulum</keyword>
<keyword id="KW-0325">Glycoprotein</keyword>
<keyword id="KW-0328">Glycosyltransferase</keyword>
<keyword id="KW-0472">Membrane</keyword>
<keyword id="KW-1185">Reference proteome</keyword>
<keyword id="KW-0808">Transferase</keyword>
<keyword id="KW-0812">Transmembrane</keyword>
<keyword id="KW-1133">Transmembrane helix</keyword>
<accession>Q8T8L8</accession>
<accession>Q8MQM2</accession>
<accession>Q9VTG3</accession>